<evidence type="ECO:0000255" key="1">
    <source>
        <dbReference type="HAMAP-Rule" id="MF_00432"/>
    </source>
</evidence>
<proteinExistence type="inferred from homology"/>
<name>PETG_CYACA</name>
<sequence>MVEVLLTGIVLGSIFITLLGLLAAAKLQYNRKKTN</sequence>
<reference key="1">
    <citation type="journal article" date="2000" name="J. Mol. Evol.">
        <title>The structure and gene repertoire of an ancient red algal plastid genome.</title>
        <authorList>
            <person name="Gloeckner G."/>
            <person name="Rosenthal A."/>
            <person name="Valentin K.-U."/>
        </authorList>
    </citation>
    <scope>NUCLEOTIDE SEQUENCE [LARGE SCALE GENOMIC DNA]</scope>
    <source>
        <strain>RK-1</strain>
    </source>
</reference>
<comment type="function">
    <text evidence="1">Component of the cytochrome b6-f complex, which mediates electron transfer between photosystem II (PSII) and photosystem I (PSI), cyclic electron flow around PSI, and state transitions. PetG is required for either the stability or assembly of the cytochrome b6-f complex.</text>
</comment>
<comment type="subunit">
    <text evidence="1">The 4 large subunits of the cytochrome b6-f complex are cytochrome b6, subunit IV (17 kDa polypeptide, PetD), cytochrome f and the Rieske protein, while the 4 small subunits are PetG, PetL, PetM and PetN. The complex functions as a dimer.</text>
</comment>
<comment type="subcellular location">
    <subcellularLocation>
        <location evidence="1">Plastid</location>
        <location evidence="1">Chloroplast thylakoid membrane</location>
        <topology evidence="1">Single-pass membrane protein</topology>
    </subcellularLocation>
</comment>
<comment type="similarity">
    <text evidence="1">Belongs to the PetG family.</text>
</comment>
<geneLocation type="chloroplast"/>
<accession>Q9TLQ9</accession>
<gene>
    <name evidence="1" type="primary">petG</name>
</gene>
<keyword id="KW-0150">Chloroplast</keyword>
<keyword id="KW-0249">Electron transport</keyword>
<keyword id="KW-0472">Membrane</keyword>
<keyword id="KW-0602">Photosynthesis</keyword>
<keyword id="KW-0934">Plastid</keyword>
<keyword id="KW-0793">Thylakoid</keyword>
<keyword id="KW-0812">Transmembrane</keyword>
<keyword id="KW-1133">Transmembrane helix</keyword>
<keyword id="KW-0813">Transport</keyword>
<dbReference type="EMBL" id="AF022186">
    <property type="protein sequence ID" value="AAF12884.1"/>
    <property type="molecule type" value="Genomic_DNA"/>
</dbReference>
<dbReference type="RefSeq" id="NP_045210.1">
    <property type="nucleotide sequence ID" value="NC_001840.1"/>
</dbReference>
<dbReference type="SMR" id="Q9TLQ9"/>
<dbReference type="GeneID" id="800266"/>
<dbReference type="GO" id="GO:0009535">
    <property type="term" value="C:chloroplast thylakoid membrane"/>
    <property type="evidence" value="ECO:0007669"/>
    <property type="project" value="UniProtKB-SubCell"/>
</dbReference>
<dbReference type="GO" id="GO:0009512">
    <property type="term" value="C:cytochrome b6f complex"/>
    <property type="evidence" value="ECO:0007669"/>
    <property type="project" value="InterPro"/>
</dbReference>
<dbReference type="GO" id="GO:0045158">
    <property type="term" value="F:electron transporter, transferring electrons within cytochrome b6/f complex of photosystem II activity"/>
    <property type="evidence" value="ECO:0007669"/>
    <property type="project" value="UniProtKB-UniRule"/>
</dbReference>
<dbReference type="GO" id="GO:0017004">
    <property type="term" value="P:cytochrome complex assembly"/>
    <property type="evidence" value="ECO:0007669"/>
    <property type="project" value="UniProtKB-UniRule"/>
</dbReference>
<dbReference type="GO" id="GO:0015979">
    <property type="term" value="P:photosynthesis"/>
    <property type="evidence" value="ECO:0007669"/>
    <property type="project" value="UniProtKB-KW"/>
</dbReference>
<dbReference type="HAMAP" id="MF_00432">
    <property type="entry name" value="Cytb6_f_PetG"/>
    <property type="match status" value="1"/>
</dbReference>
<dbReference type="InterPro" id="IPR003683">
    <property type="entry name" value="Cyt_6/f_cplx_su5"/>
</dbReference>
<dbReference type="InterPro" id="IPR036099">
    <property type="entry name" value="Cyt_6/f_cplx_su5_sf"/>
</dbReference>
<dbReference type="Pfam" id="PF02529">
    <property type="entry name" value="PetG"/>
    <property type="match status" value="1"/>
</dbReference>
<dbReference type="PIRSF" id="PIRSF000034">
    <property type="entry name" value="Cyt_b6-f_V"/>
    <property type="match status" value="1"/>
</dbReference>
<dbReference type="SUPFAM" id="SSF103446">
    <property type="entry name" value="PetG subunit of the cytochrome b6f complex"/>
    <property type="match status" value="1"/>
</dbReference>
<organism>
    <name type="scientific">Cyanidium caldarium</name>
    <name type="common">Red alga</name>
    <dbReference type="NCBI Taxonomy" id="2771"/>
    <lineage>
        <taxon>Eukaryota</taxon>
        <taxon>Rhodophyta</taxon>
        <taxon>Bangiophyceae</taxon>
        <taxon>Cyanidiales</taxon>
        <taxon>Cyanidiaceae</taxon>
        <taxon>Cyanidium</taxon>
    </lineage>
</organism>
<feature type="chain" id="PRO_0000216379" description="Cytochrome b6-f complex subunit 5">
    <location>
        <begin position="1"/>
        <end position="35"/>
    </location>
</feature>
<feature type="transmembrane region" description="Helical" evidence="1">
    <location>
        <begin position="5"/>
        <end position="25"/>
    </location>
</feature>
<protein>
    <recommendedName>
        <fullName evidence="1">Cytochrome b6-f complex subunit 5</fullName>
    </recommendedName>
    <alternativeName>
        <fullName evidence="1">Cytochrome b6-f complex subunit PetG</fullName>
    </alternativeName>
    <alternativeName>
        <fullName evidence="1">Cytochrome b6-f complex subunit V</fullName>
    </alternativeName>
</protein>